<evidence type="ECO:0000250" key="1"/>
<evidence type="ECO:0000250" key="2">
    <source>
        <dbReference type="UniProtKB" id="P0AEE5"/>
    </source>
</evidence>
<evidence type="ECO:0000250" key="3">
    <source>
        <dbReference type="UniProtKB" id="P23905"/>
    </source>
</evidence>
<evidence type="ECO:0000305" key="4"/>
<proteinExistence type="inferred from homology"/>
<name>MGLB_ECOL6</name>
<keyword id="KW-0106">Calcium</keyword>
<keyword id="KW-0145">Chemotaxis</keyword>
<keyword id="KW-0479">Metal-binding</keyword>
<keyword id="KW-0574">Periplasm</keyword>
<keyword id="KW-1185">Reference proteome</keyword>
<keyword id="KW-0732">Signal</keyword>
<keyword id="KW-0762">Sugar transport</keyword>
<keyword id="KW-0813">Transport</keyword>
<organism>
    <name type="scientific">Escherichia coli O6:H1 (strain CFT073 / ATCC 700928 / UPEC)</name>
    <dbReference type="NCBI Taxonomy" id="199310"/>
    <lineage>
        <taxon>Bacteria</taxon>
        <taxon>Pseudomonadati</taxon>
        <taxon>Pseudomonadota</taxon>
        <taxon>Gammaproteobacteria</taxon>
        <taxon>Enterobacterales</taxon>
        <taxon>Enterobacteriaceae</taxon>
        <taxon>Escherichia</taxon>
    </lineage>
</organism>
<protein>
    <recommendedName>
        <fullName evidence="2">D-galactose/methyl-galactoside binding periplasmic protein MglB</fullName>
    </recommendedName>
    <alternativeName>
        <fullName>D-galactose-binding periplasmic protein</fullName>
        <shortName>GBP</shortName>
    </alternativeName>
    <alternativeName>
        <fullName>D-galactose/D-glucose-binding protein</fullName>
        <shortName>GGBP</shortName>
    </alternativeName>
</protein>
<feature type="signal peptide" evidence="1">
    <location>
        <begin position="1"/>
        <end position="23"/>
    </location>
</feature>
<feature type="chain" id="PRO_0000043344" description="D-galactose/methyl-galactoside binding periplasmic protein MglB">
    <location>
        <begin position="24"/>
        <end position="332"/>
    </location>
</feature>
<feature type="binding site" evidence="3">
    <location>
        <position position="37"/>
    </location>
    <ligand>
        <name>beta-D-galactose</name>
        <dbReference type="ChEBI" id="CHEBI:27667"/>
    </ligand>
</feature>
<feature type="binding site" evidence="2">
    <location>
        <position position="37"/>
    </location>
    <ligand>
        <name>beta-D-glucose</name>
        <dbReference type="ChEBI" id="CHEBI:15903"/>
    </ligand>
</feature>
<feature type="binding site" evidence="3">
    <location>
        <position position="114"/>
    </location>
    <ligand>
        <name>beta-D-galactose</name>
        <dbReference type="ChEBI" id="CHEBI:27667"/>
    </ligand>
</feature>
<feature type="binding site" evidence="2">
    <location>
        <position position="114"/>
    </location>
    <ligand>
        <name>beta-D-glucose</name>
        <dbReference type="ChEBI" id="CHEBI:15903"/>
    </ligand>
</feature>
<feature type="binding site" evidence="2">
    <location>
        <position position="157"/>
    </location>
    <ligand>
        <name>Ca(2+)</name>
        <dbReference type="ChEBI" id="CHEBI:29108"/>
    </ligand>
</feature>
<feature type="binding site" evidence="2">
    <location>
        <position position="159"/>
    </location>
    <ligand>
        <name>Ca(2+)</name>
        <dbReference type="ChEBI" id="CHEBI:29108"/>
    </ligand>
</feature>
<feature type="binding site" evidence="2">
    <location>
        <position position="161"/>
    </location>
    <ligand>
        <name>Ca(2+)</name>
        <dbReference type="ChEBI" id="CHEBI:29108"/>
    </ligand>
</feature>
<feature type="binding site" evidence="2">
    <location>
        <position position="163"/>
    </location>
    <ligand>
        <name>Ca(2+)</name>
        <dbReference type="ChEBI" id="CHEBI:29108"/>
    </ligand>
</feature>
<feature type="binding site" evidence="2">
    <location>
        <position position="165"/>
    </location>
    <ligand>
        <name>Ca(2+)</name>
        <dbReference type="ChEBI" id="CHEBI:29108"/>
    </ligand>
</feature>
<feature type="binding site" evidence="3">
    <location>
        <position position="175"/>
    </location>
    <ligand>
        <name>beta-D-galactose</name>
        <dbReference type="ChEBI" id="CHEBI:27667"/>
    </ligand>
</feature>
<feature type="binding site" evidence="2">
    <location>
        <position position="175"/>
    </location>
    <ligand>
        <name>beta-D-glucose</name>
        <dbReference type="ChEBI" id="CHEBI:15903"/>
    </ligand>
</feature>
<feature type="binding site" evidence="3">
    <location>
        <position position="177"/>
    </location>
    <ligand>
        <name>beta-D-galactose</name>
        <dbReference type="ChEBI" id="CHEBI:27667"/>
    </ligand>
</feature>
<feature type="binding site" evidence="2">
    <location>
        <position position="177"/>
    </location>
    <ligand>
        <name>beta-D-glucose</name>
        <dbReference type="ChEBI" id="CHEBI:15903"/>
    </ligand>
</feature>
<feature type="binding site" evidence="3">
    <location>
        <position position="181"/>
    </location>
    <ligand>
        <name>beta-D-galactose</name>
        <dbReference type="ChEBI" id="CHEBI:27667"/>
    </ligand>
</feature>
<feature type="binding site" evidence="2">
    <location>
        <position position="181"/>
    </location>
    <ligand>
        <name>beta-D-glucose</name>
        <dbReference type="ChEBI" id="CHEBI:15903"/>
    </ligand>
</feature>
<feature type="binding site" evidence="2">
    <location>
        <position position="228"/>
    </location>
    <ligand>
        <name>Ca(2+)</name>
        <dbReference type="ChEBI" id="CHEBI:29108"/>
    </ligand>
</feature>
<feature type="binding site" evidence="3">
    <location>
        <position position="234"/>
    </location>
    <ligand>
        <name>beta-D-galactose</name>
        <dbReference type="ChEBI" id="CHEBI:27667"/>
    </ligand>
</feature>
<feature type="binding site" evidence="2">
    <location>
        <position position="234"/>
    </location>
    <ligand>
        <name>beta-D-glucose</name>
        <dbReference type="ChEBI" id="CHEBI:15903"/>
    </ligand>
</feature>
<feature type="binding site" evidence="3">
    <location>
        <position position="259"/>
    </location>
    <ligand>
        <name>beta-D-galactose</name>
        <dbReference type="ChEBI" id="CHEBI:27667"/>
    </ligand>
</feature>
<feature type="binding site" evidence="2">
    <location>
        <position position="259"/>
    </location>
    <ligand>
        <name>beta-D-glucose</name>
        <dbReference type="ChEBI" id="CHEBI:15903"/>
    </ligand>
</feature>
<feature type="binding site" evidence="3">
    <location>
        <position position="279"/>
    </location>
    <ligand>
        <name>beta-D-galactose</name>
        <dbReference type="ChEBI" id="CHEBI:27667"/>
    </ligand>
</feature>
<feature type="binding site" evidence="2">
    <location>
        <position position="279"/>
    </location>
    <ligand>
        <name>beta-D-glucose</name>
        <dbReference type="ChEBI" id="CHEBI:15903"/>
    </ligand>
</feature>
<feature type="site" description="Interacts with membrane-bound trg signal transducer" evidence="1">
    <location>
        <position position="97"/>
    </location>
</feature>
<gene>
    <name type="primary">mglB</name>
    <name type="ordered locus">c2684</name>
</gene>
<reference key="1">
    <citation type="journal article" date="2002" name="Proc. Natl. Acad. Sci. U.S.A.">
        <title>Extensive mosaic structure revealed by the complete genome sequence of uropathogenic Escherichia coli.</title>
        <authorList>
            <person name="Welch R.A."/>
            <person name="Burland V."/>
            <person name="Plunkett G. III"/>
            <person name="Redford P."/>
            <person name="Roesch P."/>
            <person name="Rasko D."/>
            <person name="Buckles E.L."/>
            <person name="Liou S.-R."/>
            <person name="Boutin A."/>
            <person name="Hackett J."/>
            <person name="Stroud D."/>
            <person name="Mayhew G.F."/>
            <person name="Rose D.J."/>
            <person name="Zhou S."/>
            <person name="Schwartz D.C."/>
            <person name="Perna N.T."/>
            <person name="Mobley H.L.T."/>
            <person name="Donnenberg M.S."/>
            <person name="Blattner F.R."/>
        </authorList>
    </citation>
    <scope>NUCLEOTIDE SEQUENCE [LARGE SCALE GENOMIC DNA]</scope>
    <source>
        <strain>CFT073 / ATCC 700928 / UPEC</strain>
    </source>
</reference>
<dbReference type="EMBL" id="AE014075">
    <property type="protein sequence ID" value="AAN81140.1"/>
    <property type="molecule type" value="Genomic_DNA"/>
</dbReference>
<dbReference type="RefSeq" id="WP_001036964.1">
    <property type="nucleotide sequence ID" value="NZ_CP051263.1"/>
</dbReference>
<dbReference type="BMRB" id="P0AEE6"/>
<dbReference type="SMR" id="P0AEE6"/>
<dbReference type="STRING" id="199310.c2684"/>
<dbReference type="GeneID" id="93775032"/>
<dbReference type="KEGG" id="ecc:c2684"/>
<dbReference type="eggNOG" id="COG1879">
    <property type="taxonomic scope" value="Bacteria"/>
</dbReference>
<dbReference type="HOGENOM" id="CLU_037628_3_1_6"/>
<dbReference type="BioCyc" id="ECOL199310:C2684-MONOMER"/>
<dbReference type="Proteomes" id="UP000001410">
    <property type="component" value="Chromosome"/>
</dbReference>
<dbReference type="GO" id="GO:0030288">
    <property type="term" value="C:outer membrane-bounded periplasmic space"/>
    <property type="evidence" value="ECO:0007669"/>
    <property type="project" value="TreeGrafter"/>
</dbReference>
<dbReference type="GO" id="GO:0030246">
    <property type="term" value="F:carbohydrate binding"/>
    <property type="evidence" value="ECO:0007669"/>
    <property type="project" value="InterPro"/>
</dbReference>
<dbReference type="GO" id="GO:0046872">
    <property type="term" value="F:metal ion binding"/>
    <property type="evidence" value="ECO:0007669"/>
    <property type="project" value="UniProtKB-KW"/>
</dbReference>
<dbReference type="GO" id="GO:0006935">
    <property type="term" value="P:chemotaxis"/>
    <property type="evidence" value="ECO:0007669"/>
    <property type="project" value="UniProtKB-KW"/>
</dbReference>
<dbReference type="GO" id="GO:0055085">
    <property type="term" value="P:transmembrane transport"/>
    <property type="evidence" value="ECO:0007669"/>
    <property type="project" value="UniProtKB-ARBA"/>
</dbReference>
<dbReference type="CDD" id="cd01539">
    <property type="entry name" value="PBP1_GGBP"/>
    <property type="match status" value="1"/>
</dbReference>
<dbReference type="FunFam" id="3.40.50.2300:FF:000038">
    <property type="entry name" value="Galactose ABC transporter substrate-binding protein"/>
    <property type="match status" value="1"/>
</dbReference>
<dbReference type="Gene3D" id="3.40.50.2300">
    <property type="match status" value="2"/>
</dbReference>
<dbReference type="InterPro" id="IPR050555">
    <property type="entry name" value="Bact_Solute-Bind_Prot2"/>
</dbReference>
<dbReference type="InterPro" id="IPR044085">
    <property type="entry name" value="MglB-like_PBP1"/>
</dbReference>
<dbReference type="InterPro" id="IPR028082">
    <property type="entry name" value="Peripla_BP_I"/>
</dbReference>
<dbReference type="InterPro" id="IPR025997">
    <property type="entry name" value="SBP_2_dom"/>
</dbReference>
<dbReference type="NCBIfam" id="NF011924">
    <property type="entry name" value="PRK15395.1"/>
    <property type="match status" value="1"/>
</dbReference>
<dbReference type="PANTHER" id="PTHR30036:SF2">
    <property type="entry name" value="D-GALACTOSE_METHYL-GALACTOSIDE BINDING PERIPLASMIC PROTEIN MGLB"/>
    <property type="match status" value="1"/>
</dbReference>
<dbReference type="PANTHER" id="PTHR30036">
    <property type="entry name" value="D-XYLOSE-BINDING PERIPLASMIC PROTEIN"/>
    <property type="match status" value="1"/>
</dbReference>
<dbReference type="Pfam" id="PF13407">
    <property type="entry name" value="Peripla_BP_4"/>
    <property type="match status" value="1"/>
</dbReference>
<dbReference type="SUPFAM" id="SSF53822">
    <property type="entry name" value="Periplasmic binding protein-like I"/>
    <property type="match status" value="1"/>
</dbReference>
<sequence>MNKKVLTLSAVMASMLFGAAAHAADTRIGVTIYKYDDNFMSVVRKAIEQDAKAAPDVQLLMNDSQNDQSKQNDQIDVLLAKGVKALAINLVDPAAAGTVIEKARGQNVPVVFFNKEPSRKALDSYDKAYYVGTDSKESGIIQGDLIAKHWAANQGWDLNKDGQIQFVLLKGEPGHPDAEARTTYVIKELNDKGIKTEQLQLDTAMWDTAQAKDKMDAWLSGPNANKIEVVIANNDAMAMGAVEALKAHNKSSIPVFGVDALPEALALVKSGALAGTVLNDANNQAKATFDLAKNLADGKGAADGTNWKIDNKVVRVPYVGVDKDNLAEFSKK</sequence>
<comment type="function">
    <text evidence="2">Part of the ABC transporter complex MglABC involved in galactose/methyl galactoside import (By similarity). In addition, binds D-galactose and D-glucose and plays a role in the chemotaxis towards these two sugars by interacting with the Trg chemoreceptor (By similarity).</text>
</comment>
<comment type="subunit">
    <text evidence="2">The ABC transporter complex is composed of one ATP-binding protein (MglA), two transmembrane proteins (MglC) and a solute-binding protein (MglB).</text>
</comment>
<comment type="subcellular location">
    <subcellularLocation>
        <location evidence="1">Periplasm</location>
    </subcellularLocation>
</comment>
<comment type="domain">
    <text evidence="1">The calcium-binding site is structurally similar to that of EF-hand proteins, but is in two parts, with the last calcium ligand provided by Glu-228.</text>
</comment>
<comment type="similarity">
    <text evidence="4">Belongs to the bacterial solute-binding protein 2 family.</text>
</comment>
<accession>P0AEE6</accession>
<accession>P02927</accession>
<accession>P17775</accession>